<gene>
    <name evidence="1" type="primary">gcvH</name>
    <name type="ordered locus">IL2093</name>
</gene>
<organism>
    <name type="scientific">Idiomarina loihiensis (strain ATCC BAA-735 / DSM 15497 / L2-TR)</name>
    <dbReference type="NCBI Taxonomy" id="283942"/>
    <lineage>
        <taxon>Bacteria</taxon>
        <taxon>Pseudomonadati</taxon>
        <taxon>Pseudomonadota</taxon>
        <taxon>Gammaproteobacteria</taxon>
        <taxon>Alteromonadales</taxon>
        <taxon>Idiomarinaceae</taxon>
        <taxon>Idiomarina</taxon>
    </lineage>
</organism>
<reference key="1">
    <citation type="journal article" date="2004" name="Proc. Natl. Acad. Sci. U.S.A.">
        <title>Genome sequence of the deep-sea gamma-proteobacterium Idiomarina loihiensis reveals amino acid fermentation as a source of carbon and energy.</title>
        <authorList>
            <person name="Hou S."/>
            <person name="Saw J.H."/>
            <person name="Lee K.S."/>
            <person name="Freitas T.A."/>
            <person name="Belisle C."/>
            <person name="Kawarabayasi Y."/>
            <person name="Donachie S.P."/>
            <person name="Pikina A."/>
            <person name="Galperin M.Y."/>
            <person name="Koonin E.V."/>
            <person name="Makarova K.S."/>
            <person name="Omelchenko M.V."/>
            <person name="Sorokin A."/>
            <person name="Wolf Y.I."/>
            <person name="Li Q.X."/>
            <person name="Keum Y.S."/>
            <person name="Campbell S."/>
            <person name="Denery J."/>
            <person name="Aizawa S."/>
            <person name="Shibata S."/>
            <person name="Malahoff A."/>
            <person name="Alam M."/>
        </authorList>
    </citation>
    <scope>NUCLEOTIDE SEQUENCE [LARGE SCALE GENOMIC DNA]</scope>
    <source>
        <strain>ATCC BAA-735 / DSM 15497 / L2-TR</strain>
    </source>
</reference>
<comment type="function">
    <text evidence="1">The glycine cleavage system catalyzes the degradation of glycine. The H protein shuttles the methylamine group of glycine from the P protein to the T protein.</text>
</comment>
<comment type="cofactor">
    <cofactor evidence="1">
        <name>(R)-lipoate</name>
        <dbReference type="ChEBI" id="CHEBI:83088"/>
    </cofactor>
    <text evidence="1">Binds 1 lipoyl cofactor covalently.</text>
</comment>
<comment type="subunit">
    <text evidence="1">The glycine cleavage system is composed of four proteins: P, T, L and H.</text>
</comment>
<comment type="similarity">
    <text evidence="1">Belongs to the GcvH family.</text>
</comment>
<sequence>MSNIPADLKYASTHEWVRDEGDGTFTVGISEHAQELLGDMVFVELPDVGDKVATGDDIAVAESVKAASDIYAPMTGEVVAINEDLEDAPETVNNDPYGDGWLFRIKADDSSELDNLLDANTYEASIDED</sequence>
<name>GCSH_IDILO</name>
<proteinExistence type="inferred from homology"/>
<dbReference type="EMBL" id="AE017340">
    <property type="protein sequence ID" value="AAV82925.1"/>
    <property type="molecule type" value="Genomic_DNA"/>
</dbReference>
<dbReference type="RefSeq" id="WP_011235321.1">
    <property type="nucleotide sequence ID" value="NC_006512.1"/>
</dbReference>
<dbReference type="SMR" id="Q5R191"/>
<dbReference type="STRING" id="283942.IL2093"/>
<dbReference type="GeneID" id="41337282"/>
<dbReference type="KEGG" id="ilo:IL2093"/>
<dbReference type="eggNOG" id="COG0509">
    <property type="taxonomic scope" value="Bacteria"/>
</dbReference>
<dbReference type="HOGENOM" id="CLU_097408_2_0_6"/>
<dbReference type="OrthoDB" id="9796712at2"/>
<dbReference type="Proteomes" id="UP000001171">
    <property type="component" value="Chromosome"/>
</dbReference>
<dbReference type="GO" id="GO:0005829">
    <property type="term" value="C:cytosol"/>
    <property type="evidence" value="ECO:0007669"/>
    <property type="project" value="TreeGrafter"/>
</dbReference>
<dbReference type="GO" id="GO:0005960">
    <property type="term" value="C:glycine cleavage complex"/>
    <property type="evidence" value="ECO:0007669"/>
    <property type="project" value="InterPro"/>
</dbReference>
<dbReference type="GO" id="GO:0019464">
    <property type="term" value="P:glycine decarboxylation via glycine cleavage system"/>
    <property type="evidence" value="ECO:0007669"/>
    <property type="project" value="UniProtKB-UniRule"/>
</dbReference>
<dbReference type="CDD" id="cd06848">
    <property type="entry name" value="GCS_H"/>
    <property type="match status" value="1"/>
</dbReference>
<dbReference type="FunFam" id="2.40.50.100:FF:000011">
    <property type="entry name" value="Glycine cleavage system H protein"/>
    <property type="match status" value="1"/>
</dbReference>
<dbReference type="Gene3D" id="2.40.50.100">
    <property type="match status" value="1"/>
</dbReference>
<dbReference type="HAMAP" id="MF_00272">
    <property type="entry name" value="GcvH"/>
    <property type="match status" value="1"/>
</dbReference>
<dbReference type="InterPro" id="IPR003016">
    <property type="entry name" value="2-oxoA_DH_lipoyl-BS"/>
</dbReference>
<dbReference type="InterPro" id="IPR000089">
    <property type="entry name" value="Biotin_lipoyl"/>
</dbReference>
<dbReference type="InterPro" id="IPR002930">
    <property type="entry name" value="GCV_H"/>
</dbReference>
<dbReference type="InterPro" id="IPR033753">
    <property type="entry name" value="GCV_H/Fam206"/>
</dbReference>
<dbReference type="InterPro" id="IPR017453">
    <property type="entry name" value="GCV_H_sub"/>
</dbReference>
<dbReference type="InterPro" id="IPR011053">
    <property type="entry name" value="Single_hybrid_motif"/>
</dbReference>
<dbReference type="NCBIfam" id="TIGR00527">
    <property type="entry name" value="gcvH"/>
    <property type="match status" value="1"/>
</dbReference>
<dbReference type="NCBIfam" id="NF002270">
    <property type="entry name" value="PRK01202.1"/>
    <property type="match status" value="1"/>
</dbReference>
<dbReference type="PANTHER" id="PTHR11715">
    <property type="entry name" value="GLYCINE CLEAVAGE SYSTEM H PROTEIN"/>
    <property type="match status" value="1"/>
</dbReference>
<dbReference type="PANTHER" id="PTHR11715:SF3">
    <property type="entry name" value="GLYCINE CLEAVAGE SYSTEM H PROTEIN-RELATED"/>
    <property type="match status" value="1"/>
</dbReference>
<dbReference type="Pfam" id="PF01597">
    <property type="entry name" value="GCV_H"/>
    <property type="match status" value="1"/>
</dbReference>
<dbReference type="SUPFAM" id="SSF51230">
    <property type="entry name" value="Single hybrid motif"/>
    <property type="match status" value="1"/>
</dbReference>
<dbReference type="PROSITE" id="PS50968">
    <property type="entry name" value="BIOTINYL_LIPOYL"/>
    <property type="match status" value="1"/>
</dbReference>
<dbReference type="PROSITE" id="PS00189">
    <property type="entry name" value="LIPOYL"/>
    <property type="match status" value="1"/>
</dbReference>
<feature type="chain" id="PRO_0000302382" description="Glycine cleavage system H protein">
    <location>
        <begin position="1"/>
        <end position="129"/>
    </location>
</feature>
<feature type="domain" description="Lipoyl-binding" evidence="2">
    <location>
        <begin position="24"/>
        <end position="106"/>
    </location>
</feature>
<feature type="modified residue" description="N6-lipoyllysine" evidence="1">
    <location>
        <position position="65"/>
    </location>
</feature>
<evidence type="ECO:0000255" key="1">
    <source>
        <dbReference type="HAMAP-Rule" id="MF_00272"/>
    </source>
</evidence>
<evidence type="ECO:0000255" key="2">
    <source>
        <dbReference type="PROSITE-ProRule" id="PRU01066"/>
    </source>
</evidence>
<protein>
    <recommendedName>
        <fullName evidence="1">Glycine cleavage system H protein</fullName>
    </recommendedName>
</protein>
<keyword id="KW-0450">Lipoyl</keyword>
<keyword id="KW-1185">Reference proteome</keyword>
<accession>Q5R191</accession>